<accession>P05575</accession>
<keyword id="KW-0903">Direct protein sequencing</keyword>
<keyword id="KW-1015">Disulfide bond</keyword>
<keyword id="KW-0325">Glycoprotein</keyword>
<keyword id="KW-0646">Protease inhibitor</keyword>
<keyword id="KW-0677">Repeat</keyword>
<keyword id="KW-0964">Secreted</keyword>
<keyword id="KW-0722">Serine protease inhibitor</keyword>
<dbReference type="PIR" id="H31437">
    <property type="entry name" value="H31437"/>
</dbReference>
<dbReference type="SMR" id="P05575"/>
<dbReference type="GO" id="GO:0005576">
    <property type="term" value="C:extracellular region"/>
    <property type="evidence" value="ECO:0007669"/>
    <property type="project" value="UniProtKB-SubCell"/>
</dbReference>
<dbReference type="GO" id="GO:0004867">
    <property type="term" value="F:serine-type endopeptidase inhibitor activity"/>
    <property type="evidence" value="ECO:0007669"/>
    <property type="project" value="UniProtKB-KW"/>
</dbReference>
<dbReference type="CDD" id="cd00104">
    <property type="entry name" value="KAZAL_FS"/>
    <property type="match status" value="1"/>
</dbReference>
<dbReference type="FunFam" id="3.30.60.30:FF:000037">
    <property type="entry name" value="Ovomucoid"/>
    <property type="match status" value="1"/>
</dbReference>
<dbReference type="Gene3D" id="3.30.60.30">
    <property type="match status" value="1"/>
</dbReference>
<dbReference type="InterPro" id="IPR051597">
    <property type="entry name" value="Bifunctional_prot_inhibitor"/>
</dbReference>
<dbReference type="InterPro" id="IPR002350">
    <property type="entry name" value="Kazal_dom"/>
</dbReference>
<dbReference type="InterPro" id="IPR036058">
    <property type="entry name" value="Kazal_dom_sf"/>
</dbReference>
<dbReference type="InterPro" id="IPR001239">
    <property type="entry name" value="Prot_inh_Kazal-m"/>
</dbReference>
<dbReference type="PANTHER" id="PTHR47729:SF1">
    <property type="entry name" value="OVOMUCOID-LIKE-RELATED"/>
    <property type="match status" value="1"/>
</dbReference>
<dbReference type="PANTHER" id="PTHR47729">
    <property type="entry name" value="SERINE PEPTIDASE INHIBITOR, KAZAL TYPE 2, TANDEM DUPLICATE 1-RELATED"/>
    <property type="match status" value="1"/>
</dbReference>
<dbReference type="Pfam" id="PF00050">
    <property type="entry name" value="Kazal_1"/>
    <property type="match status" value="1"/>
</dbReference>
<dbReference type="PRINTS" id="PR00290">
    <property type="entry name" value="KAZALINHBTR"/>
</dbReference>
<dbReference type="SMART" id="SM00280">
    <property type="entry name" value="KAZAL"/>
    <property type="match status" value="1"/>
</dbReference>
<dbReference type="SUPFAM" id="SSF100895">
    <property type="entry name" value="Kazal-type serine protease inhibitors"/>
    <property type="match status" value="1"/>
</dbReference>
<dbReference type="PROSITE" id="PS00282">
    <property type="entry name" value="KAZAL_1"/>
    <property type="match status" value="1"/>
</dbReference>
<dbReference type="PROSITE" id="PS51465">
    <property type="entry name" value="KAZAL_2"/>
    <property type="match status" value="1"/>
</dbReference>
<organism>
    <name type="scientific">Cereopsis novaehollandiae</name>
    <name type="common">Cape Barren goose</name>
    <dbReference type="NCBI Taxonomy" id="8858"/>
    <lineage>
        <taxon>Eukaryota</taxon>
        <taxon>Metazoa</taxon>
        <taxon>Chordata</taxon>
        <taxon>Craniata</taxon>
        <taxon>Vertebrata</taxon>
        <taxon>Euteleostomi</taxon>
        <taxon>Archelosauria</taxon>
        <taxon>Archosauria</taxon>
        <taxon>Dinosauria</taxon>
        <taxon>Saurischia</taxon>
        <taxon>Theropoda</taxon>
        <taxon>Coelurosauria</taxon>
        <taxon>Aves</taxon>
        <taxon>Neognathae</taxon>
        <taxon>Galloanserae</taxon>
        <taxon>Anseriformes</taxon>
        <taxon>Anatidae</taxon>
        <taxon>Anserinae</taxon>
        <taxon>Cereopsis</taxon>
    </lineage>
</organism>
<feature type="chain" id="PRO_0000073079" description="Ovomucoid">
    <location>
        <begin position="1" status="less than"/>
        <end position="54" status="greater than"/>
    </location>
</feature>
<feature type="domain" description="Kazal-like" evidence="1">
    <location>
        <begin position="4"/>
        <end position="54"/>
    </location>
</feature>
<feature type="site" description="Reactive bond 3">
    <location>
        <begin position="16"/>
        <end position="17"/>
    </location>
</feature>
<feature type="glycosylation site" description="N-linked (GlcNAc...) asparagine">
    <location>
        <position position="43"/>
    </location>
</feature>
<feature type="disulfide bond">
    <location>
        <begin position="6"/>
        <end position="36"/>
    </location>
</feature>
<feature type="disulfide bond">
    <location>
        <begin position="14"/>
        <end position="33"/>
    </location>
</feature>
<feature type="disulfide bond">
    <location>
        <begin position="22"/>
        <end position="54"/>
    </location>
</feature>
<feature type="non-terminal residue">
    <location>
        <position position="1"/>
    </location>
</feature>
<feature type="non-terminal residue">
    <location>
        <position position="54"/>
    </location>
</feature>
<protein>
    <recommendedName>
        <fullName>Ovomucoid</fullName>
    </recommendedName>
</protein>
<sequence>VATVDCSDYPKPACRMEYMPLCGSDNKTYGNKCNFCNAVVDSNGTLTLSHFGKC</sequence>
<name>IOVO_CERNO</name>
<reference key="1">
    <citation type="journal article" date="1987" name="Biochemistry">
        <title>Ovomucoid third domains from 100 avian species: isolation, sequences, and hypervariability of enzyme-inhibitor contact residues.</title>
        <authorList>
            <person name="Laskowski M. Jr."/>
            <person name="Kato I."/>
            <person name="Ardelt W."/>
            <person name="Cook J."/>
            <person name="Denton A."/>
            <person name="Empie M.W."/>
            <person name="Kohr W.J."/>
            <person name="Park S.J."/>
            <person name="Parks K."/>
            <person name="Schatzley B.L."/>
            <person name="Schoenberger O.L."/>
            <person name="Tashiro M."/>
            <person name="Vichot G."/>
            <person name="Whatley H.E."/>
            <person name="Wieczorek A."/>
            <person name="Wieczorek M."/>
        </authorList>
    </citation>
    <scope>PROTEIN SEQUENCE</scope>
</reference>
<proteinExistence type="evidence at protein level"/>
<comment type="subcellular location">
    <subcellularLocation>
        <location>Secreted</location>
    </subcellularLocation>
</comment>
<comment type="domain">
    <text>Avian ovomucoid consists of three homologous, tandem Kazal family inhibitory domains.</text>
</comment>
<evidence type="ECO:0000255" key="1">
    <source>
        <dbReference type="PROSITE-ProRule" id="PRU00798"/>
    </source>
</evidence>